<gene>
    <name evidence="1" type="primary">speH</name>
    <name type="ordered locus">Pisl_1580</name>
</gene>
<comment type="function">
    <text evidence="1">Catalyzes the decarboxylation of S-adenosylmethionine to S-adenosylmethioninamine (dcAdoMet), the propylamine donor required for the synthesis of the polyamines spermine and spermidine from the diamine putrescine.</text>
</comment>
<comment type="catalytic activity">
    <reaction evidence="1">
        <text>S-adenosyl-L-methionine + H(+) = S-adenosyl 3-(methylsulfanyl)propylamine + CO2</text>
        <dbReference type="Rhea" id="RHEA:15981"/>
        <dbReference type="ChEBI" id="CHEBI:15378"/>
        <dbReference type="ChEBI" id="CHEBI:16526"/>
        <dbReference type="ChEBI" id="CHEBI:57443"/>
        <dbReference type="ChEBI" id="CHEBI:59789"/>
        <dbReference type="EC" id="4.1.1.50"/>
    </reaction>
</comment>
<comment type="cofactor">
    <cofactor evidence="1">
        <name>pyruvate</name>
        <dbReference type="ChEBI" id="CHEBI:15361"/>
    </cofactor>
    <text evidence="1">Binds 1 pyruvoyl group covalently per subunit.</text>
</comment>
<comment type="pathway">
    <text evidence="1">Amine and polyamine biosynthesis; S-adenosylmethioninamine biosynthesis; S-adenosylmethioninamine from S-adenosyl-L-methionine: step 1/1.</text>
</comment>
<comment type="subunit">
    <text evidence="1">Heterotetramer of two alpha and two beta chains arranged as a dimer of alpha/beta heterodimers.</text>
</comment>
<comment type="PTM">
    <text evidence="1">Is synthesized initially as an inactive proenzyme. Formation of the active enzyme involves a self-maturation process in which the active site pyruvoyl group is generated from an internal serine residue via an autocatalytic post-translational modification. Two non-identical subunits are generated from the proenzyme in this reaction, and the pyruvate is formed at the N-terminus of the alpha chain, which is derived from the carboxyl end of the proenzyme. The post-translation cleavage follows an unusual pathway, termed non-hydrolytic serinolysis, in which the side chain hydroxyl group of the serine supplies its oxygen atom to form the C-terminus of the beta chain, while the remainder of the serine residue undergoes an oxidative deamination to produce ammonia and the pyruvoyl group blocking the N-terminus of the alpha chain.</text>
</comment>
<comment type="similarity">
    <text evidence="1">Belongs to the prokaryotic AdoMetDC family. Type 1 subfamily.</text>
</comment>
<dbReference type="EC" id="4.1.1.50" evidence="1"/>
<dbReference type="EMBL" id="CP000504">
    <property type="protein sequence ID" value="ABL88734.1"/>
    <property type="molecule type" value="Genomic_DNA"/>
</dbReference>
<dbReference type="RefSeq" id="WP_011763309.1">
    <property type="nucleotide sequence ID" value="NC_008701.1"/>
</dbReference>
<dbReference type="SMR" id="A1RUV2"/>
<dbReference type="STRING" id="384616.Pisl_1580"/>
<dbReference type="GeneID" id="4616828"/>
<dbReference type="KEGG" id="pis:Pisl_1580"/>
<dbReference type="eggNOG" id="arCOG00279">
    <property type="taxonomic scope" value="Archaea"/>
</dbReference>
<dbReference type="HOGENOM" id="CLU_125470_2_1_2"/>
<dbReference type="OrthoDB" id="114016at2157"/>
<dbReference type="UniPathway" id="UPA00331">
    <property type="reaction ID" value="UER00451"/>
</dbReference>
<dbReference type="Proteomes" id="UP000002595">
    <property type="component" value="Chromosome"/>
</dbReference>
<dbReference type="GO" id="GO:0005829">
    <property type="term" value="C:cytosol"/>
    <property type="evidence" value="ECO:0007669"/>
    <property type="project" value="TreeGrafter"/>
</dbReference>
<dbReference type="GO" id="GO:0004014">
    <property type="term" value="F:adenosylmethionine decarboxylase activity"/>
    <property type="evidence" value="ECO:0007669"/>
    <property type="project" value="UniProtKB-UniRule"/>
</dbReference>
<dbReference type="GO" id="GO:0008295">
    <property type="term" value="P:spermidine biosynthetic process"/>
    <property type="evidence" value="ECO:0007669"/>
    <property type="project" value="UniProtKB-UniRule"/>
</dbReference>
<dbReference type="Gene3D" id="3.30.160.750">
    <property type="match status" value="1"/>
</dbReference>
<dbReference type="Gene3D" id="3.30.360.110">
    <property type="entry name" value="S-adenosylmethionine decarboxylase domain"/>
    <property type="match status" value="1"/>
</dbReference>
<dbReference type="HAMAP" id="MF_00464">
    <property type="entry name" value="AdoMetDC_1"/>
    <property type="match status" value="1"/>
</dbReference>
<dbReference type="InterPro" id="IPR042286">
    <property type="entry name" value="AdoMetDC_C"/>
</dbReference>
<dbReference type="InterPro" id="IPR003826">
    <property type="entry name" value="AdoMetDC_fam_prok"/>
</dbReference>
<dbReference type="InterPro" id="IPR042284">
    <property type="entry name" value="AdoMetDC_N"/>
</dbReference>
<dbReference type="InterPro" id="IPR016067">
    <property type="entry name" value="S-AdoMet_deCO2ase_core"/>
</dbReference>
<dbReference type="InterPro" id="IPR017716">
    <property type="entry name" value="S-AdoMet_deCOase_pro-enz"/>
</dbReference>
<dbReference type="NCBIfam" id="TIGR03330">
    <property type="entry name" value="SAM_DCase_Bsu"/>
    <property type="match status" value="1"/>
</dbReference>
<dbReference type="PANTHER" id="PTHR33866">
    <property type="entry name" value="S-ADENOSYLMETHIONINE DECARBOXYLASE PROENZYME"/>
    <property type="match status" value="1"/>
</dbReference>
<dbReference type="PANTHER" id="PTHR33866:SF2">
    <property type="entry name" value="S-ADENOSYLMETHIONINE DECARBOXYLASE PROENZYME"/>
    <property type="match status" value="1"/>
</dbReference>
<dbReference type="Pfam" id="PF02675">
    <property type="entry name" value="AdoMet_dc"/>
    <property type="match status" value="1"/>
</dbReference>
<dbReference type="SUPFAM" id="SSF56276">
    <property type="entry name" value="S-adenosylmethionine decarboxylase"/>
    <property type="match status" value="1"/>
</dbReference>
<sequence>MAGGVGARVVVGRHIYGNLYGCDPQILRDESALITIIKEATKIANAMLLSVGSYRFGPNGGLTVFAIVAESHISIHTWPEYGFATVDVYTCGDHTDPKAAFDYIVSKLKPQKVEAFFGDRSMYKE</sequence>
<feature type="chain" id="PRO_1000125459" description="S-adenosylmethionine decarboxylase beta chain" evidence="1">
    <location>
        <begin position="1"/>
        <end position="70"/>
    </location>
</feature>
<feature type="chain" id="PRO_1000125460" description="S-adenosylmethionine decarboxylase alpha chain" evidence="1">
    <location>
        <begin position="71"/>
        <end position="125"/>
    </location>
</feature>
<feature type="active site" description="Schiff-base intermediate with substrate; via pyruvic acid" evidence="1">
    <location>
        <position position="71"/>
    </location>
</feature>
<feature type="active site" description="Proton acceptor; for processing activity" evidence="1">
    <location>
        <position position="76"/>
    </location>
</feature>
<feature type="active site" description="Proton donor; for catalytic activity" evidence="1">
    <location>
        <position position="91"/>
    </location>
</feature>
<feature type="site" description="Cleavage (non-hydrolytic); by autolysis" evidence="1">
    <location>
        <begin position="70"/>
        <end position="71"/>
    </location>
</feature>
<feature type="modified residue" description="Pyruvic acid (Ser); by autocatalysis" evidence="1">
    <location>
        <position position="71"/>
    </location>
</feature>
<protein>
    <recommendedName>
        <fullName evidence="1">S-adenosylmethionine decarboxylase proenzyme</fullName>
        <shortName evidence="1">AdoMetDC</shortName>
        <shortName evidence="1">SAMDC</shortName>
        <ecNumber evidence="1">4.1.1.50</ecNumber>
    </recommendedName>
    <component>
        <recommendedName>
            <fullName evidence="1">S-adenosylmethionine decarboxylase beta chain</fullName>
        </recommendedName>
    </component>
    <component>
        <recommendedName>
            <fullName evidence="1">S-adenosylmethionine decarboxylase alpha chain</fullName>
        </recommendedName>
    </component>
</protein>
<reference key="1">
    <citation type="submission" date="2006-12" db="EMBL/GenBank/DDBJ databases">
        <title>Complete sequence of Pyrobaculum islandicum DSM 4184.</title>
        <authorList>
            <person name="Copeland A."/>
            <person name="Lucas S."/>
            <person name="Lapidus A."/>
            <person name="Barry K."/>
            <person name="Detter J.C."/>
            <person name="Glavina del Rio T."/>
            <person name="Dalin E."/>
            <person name="Tice H."/>
            <person name="Pitluck S."/>
            <person name="Meincke L."/>
            <person name="Brettin T."/>
            <person name="Bruce D."/>
            <person name="Han C."/>
            <person name="Tapia R."/>
            <person name="Gilna P."/>
            <person name="Schmutz J."/>
            <person name="Larimer F."/>
            <person name="Land M."/>
            <person name="Hauser L."/>
            <person name="Kyrpides N."/>
            <person name="Mikhailova N."/>
            <person name="Cozen A.E."/>
            <person name="Fitz-Gibbon S.T."/>
            <person name="House C.H."/>
            <person name="Saltikov C."/>
            <person name="Lowe T."/>
            <person name="Richardson P."/>
        </authorList>
    </citation>
    <scope>NUCLEOTIDE SEQUENCE [LARGE SCALE GENOMIC DNA]</scope>
    <source>
        <strain>DSM 4184 / JCM 9189 / GEO3</strain>
    </source>
</reference>
<organism>
    <name type="scientific">Pyrobaculum islandicum (strain DSM 4184 / JCM 9189 / GEO3)</name>
    <dbReference type="NCBI Taxonomy" id="384616"/>
    <lineage>
        <taxon>Archaea</taxon>
        <taxon>Thermoproteota</taxon>
        <taxon>Thermoprotei</taxon>
        <taxon>Thermoproteales</taxon>
        <taxon>Thermoproteaceae</taxon>
        <taxon>Pyrobaculum</taxon>
    </lineage>
</organism>
<evidence type="ECO:0000255" key="1">
    <source>
        <dbReference type="HAMAP-Rule" id="MF_00464"/>
    </source>
</evidence>
<proteinExistence type="inferred from homology"/>
<name>SPEH_PYRIL</name>
<keyword id="KW-0068">Autocatalytic cleavage</keyword>
<keyword id="KW-0210">Decarboxylase</keyword>
<keyword id="KW-0456">Lyase</keyword>
<keyword id="KW-0620">Polyamine biosynthesis</keyword>
<keyword id="KW-0670">Pyruvate</keyword>
<keyword id="KW-0949">S-adenosyl-L-methionine</keyword>
<keyword id="KW-0704">Schiff base</keyword>
<keyword id="KW-0745">Spermidine biosynthesis</keyword>
<keyword id="KW-0865">Zymogen</keyword>
<accession>A1RUV2</accession>